<gene>
    <name evidence="1" type="primary">trmD</name>
    <name type="ordered locus">SSA_1302</name>
</gene>
<protein>
    <recommendedName>
        <fullName evidence="1">tRNA (guanine-N(1)-)-methyltransferase</fullName>
        <ecNumber evidence="1">2.1.1.228</ecNumber>
    </recommendedName>
    <alternativeName>
        <fullName evidence="1">M1G-methyltransferase</fullName>
    </alternativeName>
    <alternativeName>
        <fullName evidence="1">tRNA [GM37] methyltransferase</fullName>
    </alternativeName>
</protein>
<evidence type="ECO:0000255" key="1">
    <source>
        <dbReference type="HAMAP-Rule" id="MF_00605"/>
    </source>
</evidence>
<comment type="function">
    <text evidence="1">Specifically methylates guanosine-37 in various tRNAs.</text>
</comment>
<comment type="catalytic activity">
    <reaction evidence="1">
        <text>guanosine(37) in tRNA + S-adenosyl-L-methionine = N(1)-methylguanosine(37) in tRNA + S-adenosyl-L-homocysteine + H(+)</text>
        <dbReference type="Rhea" id="RHEA:36899"/>
        <dbReference type="Rhea" id="RHEA-COMP:10145"/>
        <dbReference type="Rhea" id="RHEA-COMP:10147"/>
        <dbReference type="ChEBI" id="CHEBI:15378"/>
        <dbReference type="ChEBI" id="CHEBI:57856"/>
        <dbReference type="ChEBI" id="CHEBI:59789"/>
        <dbReference type="ChEBI" id="CHEBI:73542"/>
        <dbReference type="ChEBI" id="CHEBI:74269"/>
        <dbReference type="EC" id="2.1.1.228"/>
    </reaction>
</comment>
<comment type="subunit">
    <text evidence="1">Homodimer.</text>
</comment>
<comment type="subcellular location">
    <subcellularLocation>
        <location evidence="1">Cytoplasm</location>
    </subcellularLocation>
</comment>
<comment type="similarity">
    <text evidence="1">Belongs to the RNA methyltransferase TrmD family.</text>
</comment>
<reference key="1">
    <citation type="journal article" date="2007" name="J. Bacteriol.">
        <title>Genome of the opportunistic pathogen Streptococcus sanguinis.</title>
        <authorList>
            <person name="Xu P."/>
            <person name="Alves J.M."/>
            <person name="Kitten T."/>
            <person name="Brown A."/>
            <person name="Chen Z."/>
            <person name="Ozaki L.S."/>
            <person name="Manque P."/>
            <person name="Ge X."/>
            <person name="Serrano M.G."/>
            <person name="Puiu D."/>
            <person name="Hendricks S."/>
            <person name="Wang Y."/>
            <person name="Chaplin M.D."/>
            <person name="Akan D."/>
            <person name="Paik S."/>
            <person name="Peterson D.L."/>
            <person name="Macrina F.L."/>
            <person name="Buck G.A."/>
        </authorList>
    </citation>
    <scope>NUCLEOTIDE SEQUENCE [LARGE SCALE GENOMIC DNA]</scope>
    <source>
        <strain>SK36</strain>
    </source>
</reference>
<organism>
    <name type="scientific">Streptococcus sanguinis (strain SK36)</name>
    <dbReference type="NCBI Taxonomy" id="388919"/>
    <lineage>
        <taxon>Bacteria</taxon>
        <taxon>Bacillati</taxon>
        <taxon>Bacillota</taxon>
        <taxon>Bacilli</taxon>
        <taxon>Lactobacillales</taxon>
        <taxon>Streptococcaceae</taxon>
        <taxon>Streptococcus</taxon>
    </lineage>
</organism>
<feature type="chain" id="PRO_1000006529" description="tRNA (guanine-N(1)-)-methyltransferase">
    <location>
        <begin position="1"/>
        <end position="240"/>
    </location>
</feature>
<feature type="binding site" evidence="1">
    <location>
        <position position="108"/>
    </location>
    <ligand>
        <name>S-adenosyl-L-methionine</name>
        <dbReference type="ChEBI" id="CHEBI:59789"/>
    </ligand>
</feature>
<feature type="binding site" evidence="1">
    <location>
        <begin position="127"/>
        <end position="132"/>
    </location>
    <ligand>
        <name>S-adenosyl-L-methionine</name>
        <dbReference type="ChEBI" id="CHEBI:59789"/>
    </ligand>
</feature>
<dbReference type="EC" id="2.1.1.228" evidence="1"/>
<dbReference type="EMBL" id="CP000387">
    <property type="protein sequence ID" value="ABN44701.1"/>
    <property type="molecule type" value="Genomic_DNA"/>
</dbReference>
<dbReference type="RefSeq" id="WP_011837038.1">
    <property type="nucleotide sequence ID" value="NC_009009.1"/>
</dbReference>
<dbReference type="RefSeq" id="YP_001035251.1">
    <property type="nucleotide sequence ID" value="NC_009009.1"/>
</dbReference>
<dbReference type="SMR" id="A3CNE6"/>
<dbReference type="STRING" id="388919.SSA_1302"/>
<dbReference type="KEGG" id="ssa:SSA_1302"/>
<dbReference type="PATRIC" id="fig|388919.9.peg.1239"/>
<dbReference type="eggNOG" id="COG0336">
    <property type="taxonomic scope" value="Bacteria"/>
</dbReference>
<dbReference type="HOGENOM" id="CLU_047363_0_1_9"/>
<dbReference type="OrthoDB" id="9807416at2"/>
<dbReference type="Proteomes" id="UP000002148">
    <property type="component" value="Chromosome"/>
</dbReference>
<dbReference type="GO" id="GO:0005829">
    <property type="term" value="C:cytosol"/>
    <property type="evidence" value="ECO:0007669"/>
    <property type="project" value="TreeGrafter"/>
</dbReference>
<dbReference type="GO" id="GO:0052906">
    <property type="term" value="F:tRNA (guanine(37)-N1)-methyltransferase activity"/>
    <property type="evidence" value="ECO:0007669"/>
    <property type="project" value="UniProtKB-UniRule"/>
</dbReference>
<dbReference type="GO" id="GO:0002939">
    <property type="term" value="P:tRNA N1-guanine methylation"/>
    <property type="evidence" value="ECO:0007669"/>
    <property type="project" value="TreeGrafter"/>
</dbReference>
<dbReference type="CDD" id="cd18080">
    <property type="entry name" value="TrmD-like"/>
    <property type="match status" value="1"/>
</dbReference>
<dbReference type="FunFam" id="1.10.1270.20:FF:000001">
    <property type="entry name" value="tRNA (guanine-N(1)-)-methyltransferase"/>
    <property type="match status" value="1"/>
</dbReference>
<dbReference type="FunFam" id="3.40.1280.10:FF:000001">
    <property type="entry name" value="tRNA (guanine-N(1)-)-methyltransferase"/>
    <property type="match status" value="1"/>
</dbReference>
<dbReference type="Gene3D" id="3.40.1280.10">
    <property type="match status" value="1"/>
</dbReference>
<dbReference type="Gene3D" id="1.10.1270.20">
    <property type="entry name" value="tRNA(m1g37)methyltransferase, domain 2"/>
    <property type="match status" value="1"/>
</dbReference>
<dbReference type="HAMAP" id="MF_00605">
    <property type="entry name" value="TrmD"/>
    <property type="match status" value="1"/>
</dbReference>
<dbReference type="InterPro" id="IPR029028">
    <property type="entry name" value="Alpha/beta_knot_MTases"/>
</dbReference>
<dbReference type="InterPro" id="IPR023148">
    <property type="entry name" value="tRNA_m1G_MeTrfase_C_sf"/>
</dbReference>
<dbReference type="InterPro" id="IPR002649">
    <property type="entry name" value="tRNA_m1G_MeTrfase_TrmD"/>
</dbReference>
<dbReference type="InterPro" id="IPR029026">
    <property type="entry name" value="tRNA_m1G_MTases_N"/>
</dbReference>
<dbReference type="InterPro" id="IPR016009">
    <property type="entry name" value="tRNA_MeTrfase_TRMD/TRM10"/>
</dbReference>
<dbReference type="NCBIfam" id="NF000648">
    <property type="entry name" value="PRK00026.1"/>
    <property type="match status" value="1"/>
</dbReference>
<dbReference type="NCBIfam" id="TIGR00088">
    <property type="entry name" value="trmD"/>
    <property type="match status" value="1"/>
</dbReference>
<dbReference type="PANTHER" id="PTHR46417">
    <property type="entry name" value="TRNA (GUANINE-N(1)-)-METHYLTRANSFERASE"/>
    <property type="match status" value="1"/>
</dbReference>
<dbReference type="PANTHER" id="PTHR46417:SF1">
    <property type="entry name" value="TRNA (GUANINE-N(1)-)-METHYLTRANSFERASE"/>
    <property type="match status" value="1"/>
</dbReference>
<dbReference type="Pfam" id="PF01746">
    <property type="entry name" value="tRNA_m1G_MT"/>
    <property type="match status" value="1"/>
</dbReference>
<dbReference type="PIRSF" id="PIRSF000386">
    <property type="entry name" value="tRNA_mtase"/>
    <property type="match status" value="1"/>
</dbReference>
<dbReference type="SUPFAM" id="SSF75217">
    <property type="entry name" value="alpha/beta knot"/>
    <property type="match status" value="1"/>
</dbReference>
<proteinExistence type="inferred from homology"/>
<name>TRMD_STRSV</name>
<sequence length="240" mass="27755">MKIDILTLFPEMFAPLEHSIVGKAREKGLLEINYHNFRENAEKSRHVDDEPYGGGQGMLLRAQPIFDAYDDIEKKQPRVILLDPAGRTFDQAYAEELAKEEELIFICGHYEGYDERIKTLVTDEISLGDYILTGGELAAMTMIDATVRLIPEVIGKEASHTDDSFSSGLLEYPQYTRPYDYRGMVVPEVLMSGHHENIRKWRLYESLKKTYLRRPDLLKHYEMTVEEEAMLEEIRHAHSD</sequence>
<accession>A3CNE6</accession>
<keyword id="KW-0963">Cytoplasm</keyword>
<keyword id="KW-0489">Methyltransferase</keyword>
<keyword id="KW-1185">Reference proteome</keyword>
<keyword id="KW-0949">S-adenosyl-L-methionine</keyword>
<keyword id="KW-0808">Transferase</keyword>
<keyword id="KW-0819">tRNA processing</keyword>